<evidence type="ECO:0000255" key="1">
    <source>
        <dbReference type="HAMAP-Rule" id="MF_01315"/>
    </source>
</evidence>
<evidence type="ECO:0000305" key="2"/>
<organism>
    <name type="scientific">Roseiflexus sp. (strain RS-1)</name>
    <dbReference type="NCBI Taxonomy" id="357808"/>
    <lineage>
        <taxon>Bacteria</taxon>
        <taxon>Bacillati</taxon>
        <taxon>Chloroflexota</taxon>
        <taxon>Chloroflexia</taxon>
        <taxon>Chloroflexales</taxon>
        <taxon>Roseiflexineae</taxon>
        <taxon>Roseiflexaceae</taxon>
        <taxon>Roseiflexus</taxon>
    </lineage>
</organism>
<comment type="function">
    <text evidence="1">Located at the top of the head of the 30S subunit, it contacts several helices of the 16S rRNA. In the 70S ribosome it contacts the 23S rRNA (bridge B1a) and protein L5 of the 50S subunit (bridge B1b), connecting the 2 subunits; these bridges are implicated in subunit movement. Contacts the tRNAs in the A and P-sites.</text>
</comment>
<comment type="subunit">
    <text evidence="1">Part of the 30S ribosomal subunit. Forms a loose heterodimer with protein S19. Forms two bridges to the 50S subunit in the 70S ribosome.</text>
</comment>
<comment type="similarity">
    <text evidence="1">Belongs to the universal ribosomal protein uS13 family.</text>
</comment>
<proteinExistence type="inferred from homology"/>
<dbReference type="EMBL" id="CP000686">
    <property type="protein sequence ID" value="ABQ89568.1"/>
    <property type="molecule type" value="Genomic_DNA"/>
</dbReference>
<dbReference type="RefSeq" id="WP_011955921.1">
    <property type="nucleotide sequence ID" value="NC_009523.1"/>
</dbReference>
<dbReference type="SMR" id="A5USG5"/>
<dbReference type="STRING" id="357808.RoseRS_1161"/>
<dbReference type="KEGG" id="rrs:RoseRS_1161"/>
<dbReference type="eggNOG" id="COG0099">
    <property type="taxonomic scope" value="Bacteria"/>
</dbReference>
<dbReference type="HOGENOM" id="CLU_103849_1_2_0"/>
<dbReference type="OrthoDB" id="9803610at2"/>
<dbReference type="Proteomes" id="UP000006554">
    <property type="component" value="Chromosome"/>
</dbReference>
<dbReference type="GO" id="GO:0005829">
    <property type="term" value="C:cytosol"/>
    <property type="evidence" value="ECO:0007669"/>
    <property type="project" value="TreeGrafter"/>
</dbReference>
<dbReference type="GO" id="GO:0015935">
    <property type="term" value="C:small ribosomal subunit"/>
    <property type="evidence" value="ECO:0007669"/>
    <property type="project" value="TreeGrafter"/>
</dbReference>
<dbReference type="GO" id="GO:0019843">
    <property type="term" value="F:rRNA binding"/>
    <property type="evidence" value="ECO:0007669"/>
    <property type="project" value="UniProtKB-UniRule"/>
</dbReference>
<dbReference type="GO" id="GO:0003735">
    <property type="term" value="F:structural constituent of ribosome"/>
    <property type="evidence" value="ECO:0007669"/>
    <property type="project" value="InterPro"/>
</dbReference>
<dbReference type="GO" id="GO:0000049">
    <property type="term" value="F:tRNA binding"/>
    <property type="evidence" value="ECO:0007669"/>
    <property type="project" value="UniProtKB-UniRule"/>
</dbReference>
<dbReference type="GO" id="GO:0006412">
    <property type="term" value="P:translation"/>
    <property type="evidence" value="ECO:0007669"/>
    <property type="project" value="UniProtKB-UniRule"/>
</dbReference>
<dbReference type="FunFam" id="1.10.8.50:FF:000001">
    <property type="entry name" value="30S ribosomal protein S13"/>
    <property type="match status" value="1"/>
</dbReference>
<dbReference type="FunFam" id="4.10.910.10:FF:000001">
    <property type="entry name" value="30S ribosomal protein S13"/>
    <property type="match status" value="1"/>
</dbReference>
<dbReference type="Gene3D" id="1.10.8.50">
    <property type="match status" value="1"/>
</dbReference>
<dbReference type="Gene3D" id="4.10.910.10">
    <property type="entry name" value="30s ribosomal protein s13, domain 2"/>
    <property type="match status" value="1"/>
</dbReference>
<dbReference type="HAMAP" id="MF_01315">
    <property type="entry name" value="Ribosomal_uS13"/>
    <property type="match status" value="1"/>
</dbReference>
<dbReference type="InterPro" id="IPR027437">
    <property type="entry name" value="Rbsml_uS13_C"/>
</dbReference>
<dbReference type="InterPro" id="IPR001892">
    <property type="entry name" value="Ribosomal_uS13"/>
</dbReference>
<dbReference type="InterPro" id="IPR010979">
    <property type="entry name" value="Ribosomal_uS13-like_H2TH"/>
</dbReference>
<dbReference type="InterPro" id="IPR019980">
    <property type="entry name" value="Ribosomal_uS13_bac-type"/>
</dbReference>
<dbReference type="InterPro" id="IPR018269">
    <property type="entry name" value="Ribosomal_uS13_CS"/>
</dbReference>
<dbReference type="NCBIfam" id="TIGR03631">
    <property type="entry name" value="uS13_bact"/>
    <property type="match status" value="1"/>
</dbReference>
<dbReference type="PANTHER" id="PTHR10871">
    <property type="entry name" value="30S RIBOSOMAL PROTEIN S13/40S RIBOSOMAL PROTEIN S18"/>
    <property type="match status" value="1"/>
</dbReference>
<dbReference type="PANTHER" id="PTHR10871:SF1">
    <property type="entry name" value="SMALL RIBOSOMAL SUBUNIT PROTEIN US13M"/>
    <property type="match status" value="1"/>
</dbReference>
<dbReference type="Pfam" id="PF00416">
    <property type="entry name" value="Ribosomal_S13"/>
    <property type="match status" value="1"/>
</dbReference>
<dbReference type="PIRSF" id="PIRSF002134">
    <property type="entry name" value="Ribosomal_S13"/>
    <property type="match status" value="1"/>
</dbReference>
<dbReference type="SUPFAM" id="SSF46946">
    <property type="entry name" value="S13-like H2TH domain"/>
    <property type="match status" value="1"/>
</dbReference>
<dbReference type="PROSITE" id="PS00646">
    <property type="entry name" value="RIBOSOMAL_S13_1"/>
    <property type="match status" value="1"/>
</dbReference>
<dbReference type="PROSITE" id="PS50159">
    <property type="entry name" value="RIBOSOMAL_S13_2"/>
    <property type="match status" value="1"/>
</dbReference>
<accession>A5USG5</accession>
<reference key="1">
    <citation type="submission" date="2007-04" db="EMBL/GenBank/DDBJ databases">
        <title>Complete sequence of Roseiflexus sp. RS-1.</title>
        <authorList>
            <consortium name="US DOE Joint Genome Institute"/>
            <person name="Copeland A."/>
            <person name="Lucas S."/>
            <person name="Lapidus A."/>
            <person name="Barry K."/>
            <person name="Detter J.C."/>
            <person name="Glavina del Rio T."/>
            <person name="Hammon N."/>
            <person name="Israni S."/>
            <person name="Dalin E."/>
            <person name="Tice H."/>
            <person name="Pitluck S."/>
            <person name="Chertkov O."/>
            <person name="Brettin T."/>
            <person name="Bruce D."/>
            <person name="Han C."/>
            <person name="Schmutz J."/>
            <person name="Larimer F."/>
            <person name="Land M."/>
            <person name="Hauser L."/>
            <person name="Kyrpides N."/>
            <person name="Mikhailova N."/>
            <person name="Bryant D.A."/>
            <person name="Richardson P."/>
        </authorList>
    </citation>
    <scope>NUCLEOTIDE SEQUENCE [LARGE SCALE GENOMIC DNA]</scope>
    <source>
        <strain>RS-1</strain>
    </source>
</reference>
<keyword id="KW-0687">Ribonucleoprotein</keyword>
<keyword id="KW-0689">Ribosomal protein</keyword>
<keyword id="KW-0694">RNA-binding</keyword>
<keyword id="KW-0699">rRNA-binding</keyword>
<keyword id="KW-0820">tRNA-binding</keyword>
<feature type="chain" id="PRO_1000051890" description="Small ribosomal subunit protein uS13">
    <location>
        <begin position="1"/>
        <end position="127"/>
    </location>
</feature>
<protein>
    <recommendedName>
        <fullName evidence="1">Small ribosomal subunit protein uS13</fullName>
    </recommendedName>
    <alternativeName>
        <fullName evidence="2">30S ribosomal protein S13</fullName>
    </alternativeName>
</protein>
<sequence>MARIAGVDLPRNKRIEIAITYIFGIGRSNGAEVLRKANVNPATRVRDLTEEEVSRIREIVEREYRVEGDLRREIQMNIKRLMDIGCYRGLRHRKGMPVRGQRTRTNARTRRGRRGQAIGIKKKTVKK</sequence>
<name>RS13_ROSS1</name>
<gene>
    <name evidence="1" type="primary">rpsM</name>
    <name type="ordered locus">RoseRS_1161</name>
</gene>